<reference key="1">
    <citation type="journal article" date="2000" name="Nature">
        <title>DNA sequence of both chromosomes of the cholera pathogen Vibrio cholerae.</title>
        <authorList>
            <person name="Heidelberg J.F."/>
            <person name="Eisen J.A."/>
            <person name="Nelson W.C."/>
            <person name="Clayton R.A."/>
            <person name="Gwinn M.L."/>
            <person name="Dodson R.J."/>
            <person name="Haft D.H."/>
            <person name="Hickey E.K."/>
            <person name="Peterson J.D."/>
            <person name="Umayam L.A."/>
            <person name="Gill S.R."/>
            <person name="Nelson K.E."/>
            <person name="Read T.D."/>
            <person name="Tettelin H."/>
            <person name="Richardson D.L."/>
            <person name="Ermolaeva M.D."/>
            <person name="Vamathevan J.J."/>
            <person name="Bass S."/>
            <person name="Qin H."/>
            <person name="Dragoi I."/>
            <person name="Sellers P."/>
            <person name="McDonald L.A."/>
            <person name="Utterback T.R."/>
            <person name="Fleischmann R.D."/>
            <person name="Nierman W.C."/>
            <person name="White O."/>
            <person name="Salzberg S.L."/>
            <person name="Smith H.O."/>
            <person name="Colwell R.R."/>
            <person name="Mekalanos J.J."/>
            <person name="Venter J.C."/>
            <person name="Fraser C.M."/>
        </authorList>
    </citation>
    <scope>NUCLEOTIDE SEQUENCE [LARGE SCALE GENOMIC DNA]</scope>
    <source>
        <strain>ATCC 39315 / El Tor Inaba N16961</strain>
    </source>
</reference>
<protein>
    <recommendedName>
        <fullName evidence="1">dTTP/UTP pyrophosphatase</fullName>
        <shortName evidence="1">dTTPase/UTPase</shortName>
        <ecNumber evidence="1">3.6.1.9</ecNumber>
    </recommendedName>
    <alternativeName>
        <fullName evidence="1">Nucleoside triphosphate pyrophosphatase</fullName>
    </alternativeName>
    <alternativeName>
        <fullName evidence="1">Nucleotide pyrophosphatase</fullName>
        <shortName evidence="1">Nucleotide PPase</shortName>
    </alternativeName>
</protein>
<feature type="chain" id="PRO_0000123068" description="dTTP/UTP pyrophosphatase">
    <location>
        <begin position="1"/>
        <end position="187"/>
    </location>
</feature>
<feature type="active site" description="Proton acceptor" evidence="1">
    <location>
        <position position="72"/>
    </location>
</feature>
<feature type="site" description="Important for substrate specificity" evidence="1">
    <location>
        <position position="14"/>
    </location>
</feature>
<feature type="site" description="Important for substrate specificity" evidence="1">
    <location>
        <position position="73"/>
    </location>
</feature>
<feature type="site" description="Important for substrate specificity" evidence="1">
    <location>
        <position position="155"/>
    </location>
</feature>
<accession>Q9KUU7</accession>
<name>NTPPA_VIBCH</name>
<dbReference type="EC" id="3.6.1.9" evidence="1"/>
<dbReference type="EMBL" id="AE003852">
    <property type="protein sequence ID" value="AAF93591.1"/>
    <property type="status" value="ALT_INIT"/>
    <property type="molecule type" value="Genomic_DNA"/>
</dbReference>
<dbReference type="PIR" id="C82325">
    <property type="entry name" value="C82325"/>
</dbReference>
<dbReference type="RefSeq" id="NP_230072.1">
    <property type="nucleotide sequence ID" value="NC_002505.1"/>
</dbReference>
<dbReference type="RefSeq" id="WP_000155857.1">
    <property type="nucleotide sequence ID" value="NZ_LT906614.1"/>
</dbReference>
<dbReference type="SMR" id="Q9KUU7"/>
<dbReference type="STRING" id="243277.VC_0418"/>
<dbReference type="DNASU" id="2614103"/>
<dbReference type="EnsemblBacteria" id="AAF93591">
    <property type="protein sequence ID" value="AAF93591"/>
    <property type="gene ID" value="VC_0418"/>
</dbReference>
<dbReference type="KEGG" id="vch:VC_0418"/>
<dbReference type="PATRIC" id="fig|243277.26.peg.393"/>
<dbReference type="eggNOG" id="COG0424">
    <property type="taxonomic scope" value="Bacteria"/>
</dbReference>
<dbReference type="HOGENOM" id="CLU_040416_2_1_6"/>
<dbReference type="Proteomes" id="UP000000584">
    <property type="component" value="Chromosome 1"/>
</dbReference>
<dbReference type="GO" id="GO:0005737">
    <property type="term" value="C:cytoplasm"/>
    <property type="evidence" value="ECO:0007669"/>
    <property type="project" value="UniProtKB-SubCell"/>
</dbReference>
<dbReference type="GO" id="GO:0036218">
    <property type="term" value="F:dTTP diphosphatase activity"/>
    <property type="evidence" value="ECO:0007669"/>
    <property type="project" value="RHEA"/>
</dbReference>
<dbReference type="GO" id="GO:0047429">
    <property type="term" value="F:nucleoside triphosphate diphosphatase activity"/>
    <property type="evidence" value="ECO:0000318"/>
    <property type="project" value="GO_Central"/>
</dbReference>
<dbReference type="GO" id="GO:0036221">
    <property type="term" value="F:UTP diphosphatase activity"/>
    <property type="evidence" value="ECO:0007669"/>
    <property type="project" value="RHEA"/>
</dbReference>
<dbReference type="GO" id="GO:0009117">
    <property type="term" value="P:nucleotide metabolic process"/>
    <property type="evidence" value="ECO:0007669"/>
    <property type="project" value="UniProtKB-KW"/>
</dbReference>
<dbReference type="CDD" id="cd00555">
    <property type="entry name" value="Maf"/>
    <property type="match status" value="1"/>
</dbReference>
<dbReference type="FunFam" id="3.90.950.10:FF:000004">
    <property type="entry name" value="dTTP/UTP pyrophosphatase"/>
    <property type="match status" value="1"/>
</dbReference>
<dbReference type="Gene3D" id="3.90.950.10">
    <property type="match status" value="1"/>
</dbReference>
<dbReference type="HAMAP" id="MF_00528">
    <property type="entry name" value="Maf"/>
    <property type="match status" value="1"/>
</dbReference>
<dbReference type="InterPro" id="IPR029001">
    <property type="entry name" value="ITPase-like_fam"/>
</dbReference>
<dbReference type="InterPro" id="IPR003697">
    <property type="entry name" value="Maf-like"/>
</dbReference>
<dbReference type="NCBIfam" id="TIGR00172">
    <property type="entry name" value="maf"/>
    <property type="match status" value="1"/>
</dbReference>
<dbReference type="PANTHER" id="PTHR43213">
    <property type="entry name" value="BIFUNCTIONAL DTTP/UTP PYROPHOSPHATASE/METHYLTRANSFERASE PROTEIN-RELATED"/>
    <property type="match status" value="1"/>
</dbReference>
<dbReference type="PANTHER" id="PTHR43213:SF5">
    <property type="entry name" value="BIFUNCTIONAL DTTP_UTP PYROPHOSPHATASE_METHYLTRANSFERASE PROTEIN-RELATED"/>
    <property type="match status" value="1"/>
</dbReference>
<dbReference type="Pfam" id="PF02545">
    <property type="entry name" value="Maf"/>
    <property type="match status" value="1"/>
</dbReference>
<dbReference type="PIRSF" id="PIRSF006305">
    <property type="entry name" value="Maf"/>
    <property type="match status" value="1"/>
</dbReference>
<dbReference type="SUPFAM" id="SSF52972">
    <property type="entry name" value="ITPase-like"/>
    <property type="match status" value="1"/>
</dbReference>
<gene>
    <name type="ordered locus">VC_0418</name>
</gene>
<proteinExistence type="inferred from homology"/>
<comment type="function">
    <text evidence="1">Nucleoside triphosphate pyrophosphatase that hydrolyzes dTTP and UTP. May have a dual role in cell division arrest and in preventing the incorporation of modified nucleotides into cellular nucleic acids.</text>
</comment>
<comment type="catalytic activity">
    <reaction evidence="1">
        <text>dTTP + H2O = dTMP + diphosphate + H(+)</text>
        <dbReference type="Rhea" id="RHEA:28534"/>
        <dbReference type="ChEBI" id="CHEBI:15377"/>
        <dbReference type="ChEBI" id="CHEBI:15378"/>
        <dbReference type="ChEBI" id="CHEBI:33019"/>
        <dbReference type="ChEBI" id="CHEBI:37568"/>
        <dbReference type="ChEBI" id="CHEBI:63528"/>
        <dbReference type="EC" id="3.6.1.9"/>
    </reaction>
</comment>
<comment type="catalytic activity">
    <reaction evidence="1">
        <text>UTP + H2O = UMP + diphosphate + H(+)</text>
        <dbReference type="Rhea" id="RHEA:29395"/>
        <dbReference type="ChEBI" id="CHEBI:15377"/>
        <dbReference type="ChEBI" id="CHEBI:15378"/>
        <dbReference type="ChEBI" id="CHEBI:33019"/>
        <dbReference type="ChEBI" id="CHEBI:46398"/>
        <dbReference type="ChEBI" id="CHEBI:57865"/>
        <dbReference type="EC" id="3.6.1.9"/>
    </reaction>
</comment>
<comment type="cofactor">
    <cofactor evidence="1">
        <name>a divalent metal cation</name>
        <dbReference type="ChEBI" id="CHEBI:60240"/>
    </cofactor>
</comment>
<comment type="subcellular location">
    <subcellularLocation>
        <location evidence="1">Cytoplasm</location>
    </subcellularLocation>
</comment>
<comment type="similarity">
    <text evidence="1">Belongs to the Maf family. YhdE subfamily.</text>
</comment>
<comment type="sequence caution" evidence="2">
    <conflict type="erroneous initiation">
        <sequence resource="EMBL-CDS" id="AAF93591"/>
    </conflict>
</comment>
<sequence length="187" mass="20495">MTISKLVLASGSPRRRELLAQMGYQFEVVVPNVEEKRAAAESPAQYVERLSRDKALAGAALVAAEAVVIGSDTIVVKDQQVLEKPRDFADAKRMLLKLSGSQHQVMTGVSVTCRGITHSVVVTTEVWFKTLSEQEIEAYWQSGEPCDKAGSYGIQGLGGRFVTRIEGSYHAVVGLPLYETDQLLHKF</sequence>
<keyword id="KW-0963">Cytoplasm</keyword>
<keyword id="KW-0378">Hydrolase</keyword>
<keyword id="KW-0546">Nucleotide metabolism</keyword>
<keyword id="KW-1185">Reference proteome</keyword>
<organism>
    <name type="scientific">Vibrio cholerae serotype O1 (strain ATCC 39315 / El Tor Inaba N16961)</name>
    <dbReference type="NCBI Taxonomy" id="243277"/>
    <lineage>
        <taxon>Bacteria</taxon>
        <taxon>Pseudomonadati</taxon>
        <taxon>Pseudomonadota</taxon>
        <taxon>Gammaproteobacteria</taxon>
        <taxon>Vibrionales</taxon>
        <taxon>Vibrionaceae</taxon>
        <taxon>Vibrio</taxon>
    </lineage>
</organism>
<evidence type="ECO:0000255" key="1">
    <source>
        <dbReference type="HAMAP-Rule" id="MF_00528"/>
    </source>
</evidence>
<evidence type="ECO:0000305" key="2"/>